<name>CH60_VESOH</name>
<comment type="function">
    <text evidence="1">Together with its co-chaperonin GroES, plays an essential role in assisting protein folding. The GroEL-GroES system forms a nano-cage that allows encapsulation of the non-native substrate proteins and provides a physical environment optimized to promote and accelerate protein folding.</text>
</comment>
<comment type="catalytic activity">
    <reaction evidence="1">
        <text>ATP + H2O + a folded polypeptide = ADP + phosphate + an unfolded polypeptide.</text>
        <dbReference type="EC" id="5.6.1.7"/>
    </reaction>
</comment>
<comment type="subunit">
    <text evidence="1">Forms a cylinder of 14 subunits composed of two heptameric rings stacked back-to-back. Interacts with the co-chaperonin GroES.</text>
</comment>
<comment type="subcellular location">
    <subcellularLocation>
        <location evidence="1">Cytoplasm</location>
    </subcellularLocation>
</comment>
<comment type="similarity">
    <text evidence="1">Belongs to the chaperonin (HSP60) family.</text>
</comment>
<dbReference type="EC" id="5.6.1.7" evidence="1"/>
<dbReference type="EMBL" id="AP009247">
    <property type="protein sequence ID" value="BAF61635.1"/>
    <property type="molecule type" value="Genomic_DNA"/>
</dbReference>
<dbReference type="RefSeq" id="WP_011929905.1">
    <property type="nucleotide sequence ID" value="NC_009465.1"/>
</dbReference>
<dbReference type="SMR" id="A5CWP6"/>
<dbReference type="STRING" id="412965.COSY_0516"/>
<dbReference type="KEGG" id="vok:COSY_0516"/>
<dbReference type="eggNOG" id="COG0459">
    <property type="taxonomic scope" value="Bacteria"/>
</dbReference>
<dbReference type="HOGENOM" id="CLU_016503_3_0_6"/>
<dbReference type="OrthoDB" id="9766614at2"/>
<dbReference type="Proteomes" id="UP000000247">
    <property type="component" value="Chromosome"/>
</dbReference>
<dbReference type="GO" id="GO:0005737">
    <property type="term" value="C:cytoplasm"/>
    <property type="evidence" value="ECO:0007669"/>
    <property type="project" value="UniProtKB-SubCell"/>
</dbReference>
<dbReference type="GO" id="GO:0005524">
    <property type="term" value="F:ATP binding"/>
    <property type="evidence" value="ECO:0007669"/>
    <property type="project" value="UniProtKB-UniRule"/>
</dbReference>
<dbReference type="GO" id="GO:0140662">
    <property type="term" value="F:ATP-dependent protein folding chaperone"/>
    <property type="evidence" value="ECO:0007669"/>
    <property type="project" value="InterPro"/>
</dbReference>
<dbReference type="GO" id="GO:0016853">
    <property type="term" value="F:isomerase activity"/>
    <property type="evidence" value="ECO:0007669"/>
    <property type="project" value="UniProtKB-KW"/>
</dbReference>
<dbReference type="GO" id="GO:0051082">
    <property type="term" value="F:unfolded protein binding"/>
    <property type="evidence" value="ECO:0007669"/>
    <property type="project" value="UniProtKB-UniRule"/>
</dbReference>
<dbReference type="GO" id="GO:0042026">
    <property type="term" value="P:protein refolding"/>
    <property type="evidence" value="ECO:0007669"/>
    <property type="project" value="UniProtKB-UniRule"/>
</dbReference>
<dbReference type="CDD" id="cd03344">
    <property type="entry name" value="GroEL"/>
    <property type="match status" value="1"/>
</dbReference>
<dbReference type="FunFam" id="1.10.560.10:FF:000001">
    <property type="entry name" value="60 kDa chaperonin"/>
    <property type="match status" value="1"/>
</dbReference>
<dbReference type="FunFam" id="3.50.7.10:FF:000001">
    <property type="entry name" value="60 kDa chaperonin"/>
    <property type="match status" value="1"/>
</dbReference>
<dbReference type="Gene3D" id="3.50.7.10">
    <property type="entry name" value="GroEL"/>
    <property type="match status" value="1"/>
</dbReference>
<dbReference type="Gene3D" id="1.10.560.10">
    <property type="entry name" value="GroEL-like equatorial domain"/>
    <property type="match status" value="1"/>
</dbReference>
<dbReference type="Gene3D" id="3.30.260.10">
    <property type="entry name" value="TCP-1-like chaperonin intermediate domain"/>
    <property type="match status" value="1"/>
</dbReference>
<dbReference type="HAMAP" id="MF_00600">
    <property type="entry name" value="CH60"/>
    <property type="match status" value="1"/>
</dbReference>
<dbReference type="InterPro" id="IPR018370">
    <property type="entry name" value="Chaperonin_Cpn60_CS"/>
</dbReference>
<dbReference type="InterPro" id="IPR001844">
    <property type="entry name" value="Cpn60/GroEL"/>
</dbReference>
<dbReference type="InterPro" id="IPR002423">
    <property type="entry name" value="Cpn60/GroEL/TCP-1"/>
</dbReference>
<dbReference type="InterPro" id="IPR027409">
    <property type="entry name" value="GroEL-like_apical_dom_sf"/>
</dbReference>
<dbReference type="InterPro" id="IPR027413">
    <property type="entry name" value="GROEL-like_equatorial_sf"/>
</dbReference>
<dbReference type="InterPro" id="IPR027410">
    <property type="entry name" value="TCP-1-like_intermed_sf"/>
</dbReference>
<dbReference type="NCBIfam" id="TIGR02348">
    <property type="entry name" value="GroEL"/>
    <property type="match status" value="1"/>
</dbReference>
<dbReference type="NCBIfam" id="NF000592">
    <property type="entry name" value="PRK00013.1"/>
    <property type="match status" value="1"/>
</dbReference>
<dbReference type="NCBIfam" id="NF009487">
    <property type="entry name" value="PRK12849.1"/>
    <property type="match status" value="1"/>
</dbReference>
<dbReference type="NCBIfam" id="NF009488">
    <property type="entry name" value="PRK12850.1"/>
    <property type="match status" value="1"/>
</dbReference>
<dbReference type="NCBIfam" id="NF009489">
    <property type="entry name" value="PRK12851.1"/>
    <property type="match status" value="1"/>
</dbReference>
<dbReference type="PANTHER" id="PTHR45633">
    <property type="entry name" value="60 KDA HEAT SHOCK PROTEIN, MITOCHONDRIAL"/>
    <property type="match status" value="1"/>
</dbReference>
<dbReference type="Pfam" id="PF00118">
    <property type="entry name" value="Cpn60_TCP1"/>
    <property type="match status" value="1"/>
</dbReference>
<dbReference type="PRINTS" id="PR00298">
    <property type="entry name" value="CHAPERONIN60"/>
</dbReference>
<dbReference type="SUPFAM" id="SSF52029">
    <property type="entry name" value="GroEL apical domain-like"/>
    <property type="match status" value="1"/>
</dbReference>
<dbReference type="SUPFAM" id="SSF48592">
    <property type="entry name" value="GroEL equatorial domain-like"/>
    <property type="match status" value="1"/>
</dbReference>
<dbReference type="SUPFAM" id="SSF54849">
    <property type="entry name" value="GroEL-intermediate domain like"/>
    <property type="match status" value="1"/>
</dbReference>
<dbReference type="PROSITE" id="PS00296">
    <property type="entry name" value="CHAPERONINS_CPN60"/>
    <property type="match status" value="1"/>
</dbReference>
<accession>A5CWP6</accession>
<feature type="chain" id="PRO_1000025847" description="Chaperonin GroEL">
    <location>
        <begin position="1"/>
        <end position="547"/>
    </location>
</feature>
<feature type="region of interest" description="Disordered" evidence="2">
    <location>
        <begin position="526"/>
        <end position="547"/>
    </location>
</feature>
<feature type="compositionally biased region" description="Gly residues" evidence="2">
    <location>
        <begin position="537"/>
        <end position="547"/>
    </location>
</feature>
<feature type="binding site" evidence="1">
    <location>
        <begin position="30"/>
        <end position="33"/>
    </location>
    <ligand>
        <name>ATP</name>
        <dbReference type="ChEBI" id="CHEBI:30616"/>
    </ligand>
</feature>
<feature type="binding site" evidence="1">
    <location>
        <position position="51"/>
    </location>
    <ligand>
        <name>ATP</name>
        <dbReference type="ChEBI" id="CHEBI:30616"/>
    </ligand>
</feature>
<feature type="binding site" evidence="1">
    <location>
        <begin position="87"/>
        <end position="91"/>
    </location>
    <ligand>
        <name>ATP</name>
        <dbReference type="ChEBI" id="CHEBI:30616"/>
    </ligand>
</feature>
<feature type="binding site" evidence="1">
    <location>
        <position position="415"/>
    </location>
    <ligand>
        <name>ATP</name>
        <dbReference type="ChEBI" id="CHEBI:30616"/>
    </ligand>
</feature>
<feature type="binding site" evidence="1">
    <location>
        <position position="495"/>
    </location>
    <ligand>
        <name>ATP</name>
        <dbReference type="ChEBI" id="CHEBI:30616"/>
    </ligand>
</feature>
<sequence length="547" mass="57337">MSAKDIKFGPEARNLMLDGVNMLANAVKVTLGPKGRNVVLDKSFGGPTITKDGVSVAQEITLEGKFENMGAQMVKEVASKTNDIAGDGTTTATVLAQALVTEGVKSVAAGMNPMDLKRGIDKATEVAVNALHDFSQPCNDTKAIAQVGTISANSDVSVGDIIADAMEKVGQAGVITVEEGSGFENELDVVEGMQFDRGYLSPYFVNNQDTMTADLESPFVLLHDAKISNIRDLLPALEIVQKSSKALLIIAEDIDGEALATLVVNNMRGIVKVAAVKAPGFGDRRKAILEDIAILTGSVVISEEVGLSLEKVTEEHLGTAKRIEIGKENTVIVDGAGKKSNIDGRVNQIKAQIETTTSDYDKEKLLERLAKLSGGVAVIKVGAATEVAMKEKKDHVDDALHATRAAVEEGVVPGGGVALVRTIKALDGLTGDNHDQNIGIDIAKRAMEAPLRQIVTNGGGEASVVLNNVADGKDNYGYNATTEEYGDMLKMGILDPTKVVRAALQHAASISGLMITTEAMITDIPQDATPTASPDMGGMGGMGGGMM</sequence>
<organism>
    <name type="scientific">Vesicomyosocius okutanii subsp. Calyptogena okutanii (strain HA)</name>
    <dbReference type="NCBI Taxonomy" id="412965"/>
    <lineage>
        <taxon>Bacteria</taxon>
        <taxon>Pseudomonadati</taxon>
        <taxon>Pseudomonadota</taxon>
        <taxon>Gammaproteobacteria</taxon>
        <taxon>Candidatus Pseudothioglobaceae</taxon>
        <taxon>Candidatus Vesicomyosocius</taxon>
    </lineage>
</organism>
<protein>
    <recommendedName>
        <fullName evidence="1">Chaperonin GroEL</fullName>
        <ecNumber evidence="1">5.6.1.7</ecNumber>
    </recommendedName>
    <alternativeName>
        <fullName evidence="1">60 kDa chaperonin</fullName>
    </alternativeName>
    <alternativeName>
        <fullName evidence="1">Chaperonin-60</fullName>
        <shortName evidence="1">Cpn60</shortName>
    </alternativeName>
</protein>
<proteinExistence type="inferred from homology"/>
<reference key="1">
    <citation type="journal article" date="2007" name="Curr. Biol.">
        <title>Reduced genome of the thioautotrophic intracellular symbiont in a deep-sea clam, Calyptogena okutanii.</title>
        <authorList>
            <person name="Kuwahara H."/>
            <person name="Yoshida T."/>
            <person name="Takaki Y."/>
            <person name="Shimamura S."/>
            <person name="Nishi S."/>
            <person name="Harada M."/>
            <person name="Matsuyama K."/>
            <person name="Takishita K."/>
            <person name="Kawato M."/>
            <person name="Uematsu K."/>
            <person name="Fujiwara Y."/>
            <person name="Sato T."/>
            <person name="Kato C."/>
            <person name="Kitagawa M."/>
            <person name="Kato I."/>
            <person name="Maruyama T."/>
        </authorList>
    </citation>
    <scope>NUCLEOTIDE SEQUENCE [LARGE SCALE GENOMIC DNA]</scope>
    <source>
        <strain>HA</strain>
    </source>
</reference>
<keyword id="KW-0067">ATP-binding</keyword>
<keyword id="KW-0143">Chaperone</keyword>
<keyword id="KW-0963">Cytoplasm</keyword>
<keyword id="KW-0413">Isomerase</keyword>
<keyword id="KW-0547">Nucleotide-binding</keyword>
<keyword id="KW-1185">Reference proteome</keyword>
<evidence type="ECO:0000255" key="1">
    <source>
        <dbReference type="HAMAP-Rule" id="MF_00600"/>
    </source>
</evidence>
<evidence type="ECO:0000256" key="2">
    <source>
        <dbReference type="SAM" id="MobiDB-lite"/>
    </source>
</evidence>
<gene>
    <name evidence="1" type="primary">groEL</name>
    <name evidence="1" type="synonym">groL</name>
    <name type="ordered locus">COSY_0516</name>
</gene>